<reference key="1">
    <citation type="journal article" date="2009" name="J. Bacteriol.">
        <title>The complete genome sequence of Helicobacter pylori strain G27.</title>
        <authorList>
            <person name="Baltrus D.A."/>
            <person name="Amieva M.R."/>
            <person name="Covacci A."/>
            <person name="Lowe T.M."/>
            <person name="Merrell D.S."/>
            <person name="Ottemann K.M."/>
            <person name="Stein M."/>
            <person name="Salama N.R."/>
            <person name="Guillemin K."/>
        </authorList>
    </citation>
    <scope>NUCLEOTIDE SEQUENCE [LARGE SCALE GENOMIC DNA]</scope>
    <source>
        <strain>G27</strain>
    </source>
</reference>
<organism>
    <name type="scientific">Helicobacter pylori (strain G27)</name>
    <dbReference type="NCBI Taxonomy" id="563041"/>
    <lineage>
        <taxon>Bacteria</taxon>
        <taxon>Pseudomonadati</taxon>
        <taxon>Campylobacterota</taxon>
        <taxon>Epsilonproteobacteria</taxon>
        <taxon>Campylobacterales</taxon>
        <taxon>Helicobacteraceae</taxon>
        <taxon>Helicobacter</taxon>
    </lineage>
</organism>
<dbReference type="EC" id="1.17.7.3" evidence="1"/>
<dbReference type="EMBL" id="CP001173">
    <property type="protein sequence ID" value="ACI27346.1"/>
    <property type="molecule type" value="Genomic_DNA"/>
</dbReference>
<dbReference type="RefSeq" id="WP_000892473.1">
    <property type="nucleotide sequence ID" value="NC_011333.1"/>
</dbReference>
<dbReference type="SMR" id="B5Z6Z7"/>
<dbReference type="KEGG" id="hpg:HPG27_586"/>
<dbReference type="HOGENOM" id="CLU_042258_0_0_7"/>
<dbReference type="UniPathway" id="UPA00056">
    <property type="reaction ID" value="UER00096"/>
</dbReference>
<dbReference type="Proteomes" id="UP000001735">
    <property type="component" value="Chromosome"/>
</dbReference>
<dbReference type="GO" id="GO:0051539">
    <property type="term" value="F:4 iron, 4 sulfur cluster binding"/>
    <property type="evidence" value="ECO:0007669"/>
    <property type="project" value="UniProtKB-UniRule"/>
</dbReference>
<dbReference type="GO" id="GO:0046429">
    <property type="term" value="F:4-hydroxy-3-methylbut-2-en-1-yl diphosphate synthase activity (ferredoxin)"/>
    <property type="evidence" value="ECO:0007669"/>
    <property type="project" value="UniProtKB-UniRule"/>
</dbReference>
<dbReference type="GO" id="GO:0141197">
    <property type="term" value="F:4-hydroxy-3-methylbut-2-enyl-diphosphate synthase activity (flavodoxin)"/>
    <property type="evidence" value="ECO:0007669"/>
    <property type="project" value="UniProtKB-EC"/>
</dbReference>
<dbReference type="GO" id="GO:0005506">
    <property type="term" value="F:iron ion binding"/>
    <property type="evidence" value="ECO:0007669"/>
    <property type="project" value="InterPro"/>
</dbReference>
<dbReference type="GO" id="GO:0019288">
    <property type="term" value="P:isopentenyl diphosphate biosynthetic process, methylerythritol 4-phosphate pathway"/>
    <property type="evidence" value="ECO:0007669"/>
    <property type="project" value="UniProtKB-UniRule"/>
</dbReference>
<dbReference type="GO" id="GO:0016114">
    <property type="term" value="P:terpenoid biosynthetic process"/>
    <property type="evidence" value="ECO:0007669"/>
    <property type="project" value="InterPro"/>
</dbReference>
<dbReference type="FunFam" id="3.20.20.20:FF:000001">
    <property type="entry name" value="4-hydroxy-3-methylbut-2-en-1-yl diphosphate synthase (flavodoxin)"/>
    <property type="match status" value="1"/>
</dbReference>
<dbReference type="FunFam" id="3.30.413.10:FF:000015">
    <property type="entry name" value="4-hydroxy-3-methylbut-2-en-1-yl diphosphate synthase (flavodoxin)"/>
    <property type="match status" value="1"/>
</dbReference>
<dbReference type="Gene3D" id="3.20.20.20">
    <property type="entry name" value="Dihydropteroate synthase-like"/>
    <property type="match status" value="1"/>
</dbReference>
<dbReference type="Gene3D" id="3.30.413.10">
    <property type="entry name" value="Sulfite Reductase Hemoprotein, domain 1"/>
    <property type="match status" value="1"/>
</dbReference>
<dbReference type="HAMAP" id="MF_00159">
    <property type="entry name" value="IspG"/>
    <property type="match status" value="1"/>
</dbReference>
<dbReference type="InterPro" id="IPR011005">
    <property type="entry name" value="Dihydropteroate_synth-like_sf"/>
</dbReference>
<dbReference type="InterPro" id="IPR036849">
    <property type="entry name" value="Enolase-like_C_sf"/>
</dbReference>
<dbReference type="InterPro" id="IPR016425">
    <property type="entry name" value="IspG_bac"/>
</dbReference>
<dbReference type="InterPro" id="IPR004588">
    <property type="entry name" value="IspG_bac-typ"/>
</dbReference>
<dbReference type="InterPro" id="IPR045854">
    <property type="entry name" value="NO2/SO3_Rdtase_4Fe4S_sf"/>
</dbReference>
<dbReference type="NCBIfam" id="TIGR00612">
    <property type="entry name" value="ispG_gcpE"/>
    <property type="match status" value="1"/>
</dbReference>
<dbReference type="NCBIfam" id="NF001540">
    <property type="entry name" value="PRK00366.1"/>
    <property type="match status" value="1"/>
</dbReference>
<dbReference type="PANTHER" id="PTHR30454">
    <property type="entry name" value="4-HYDROXY-3-METHYLBUT-2-EN-1-YL DIPHOSPHATE SYNTHASE"/>
    <property type="match status" value="1"/>
</dbReference>
<dbReference type="PANTHER" id="PTHR30454:SF0">
    <property type="entry name" value="4-HYDROXY-3-METHYLBUT-2-EN-1-YL DIPHOSPHATE SYNTHASE (FERREDOXIN), CHLOROPLASTIC"/>
    <property type="match status" value="1"/>
</dbReference>
<dbReference type="Pfam" id="PF04551">
    <property type="entry name" value="GcpE"/>
    <property type="match status" value="1"/>
</dbReference>
<dbReference type="PIRSF" id="PIRSF004640">
    <property type="entry name" value="IspG"/>
    <property type="match status" value="1"/>
</dbReference>
<dbReference type="SUPFAM" id="SSF51604">
    <property type="entry name" value="Enolase C-terminal domain-like"/>
    <property type="match status" value="1"/>
</dbReference>
<dbReference type="SUPFAM" id="SSF56014">
    <property type="entry name" value="Nitrite and sulphite reductase 4Fe-4S domain-like"/>
    <property type="match status" value="1"/>
</dbReference>
<accession>B5Z6Z7</accession>
<gene>
    <name evidence="1" type="primary">ispG</name>
    <name type="ordered locus">HPG27_586</name>
</gene>
<proteinExistence type="inferred from homology"/>
<comment type="function">
    <text evidence="1">Converts 2C-methyl-D-erythritol 2,4-cyclodiphosphate (ME-2,4cPP) into 1-hydroxy-2-methyl-2-(E)-butenyl 4-diphosphate.</text>
</comment>
<comment type="catalytic activity">
    <reaction evidence="1">
        <text>(2E)-4-hydroxy-3-methylbut-2-enyl diphosphate + oxidized [flavodoxin] + H2O + 2 H(+) = 2-C-methyl-D-erythritol 2,4-cyclic diphosphate + reduced [flavodoxin]</text>
        <dbReference type="Rhea" id="RHEA:43604"/>
        <dbReference type="Rhea" id="RHEA-COMP:10622"/>
        <dbReference type="Rhea" id="RHEA-COMP:10623"/>
        <dbReference type="ChEBI" id="CHEBI:15377"/>
        <dbReference type="ChEBI" id="CHEBI:15378"/>
        <dbReference type="ChEBI" id="CHEBI:57618"/>
        <dbReference type="ChEBI" id="CHEBI:58210"/>
        <dbReference type="ChEBI" id="CHEBI:58483"/>
        <dbReference type="ChEBI" id="CHEBI:128753"/>
        <dbReference type="EC" id="1.17.7.3"/>
    </reaction>
</comment>
<comment type="cofactor">
    <cofactor evidence="1">
        <name>[4Fe-4S] cluster</name>
        <dbReference type="ChEBI" id="CHEBI:49883"/>
    </cofactor>
    <text evidence="1">Binds 1 [4Fe-4S] cluster.</text>
</comment>
<comment type="pathway">
    <text evidence="1">Isoprenoid biosynthesis; isopentenyl diphosphate biosynthesis via DXP pathway; isopentenyl diphosphate from 1-deoxy-D-xylulose 5-phosphate: step 5/6.</text>
</comment>
<comment type="similarity">
    <text evidence="1">Belongs to the IspG family.</text>
</comment>
<feature type="chain" id="PRO_1000097164" description="4-hydroxy-3-methylbut-2-en-1-yl diphosphate synthase (flavodoxin)">
    <location>
        <begin position="1"/>
        <end position="359"/>
    </location>
</feature>
<feature type="binding site" evidence="1">
    <location>
        <position position="264"/>
    </location>
    <ligand>
        <name>[4Fe-4S] cluster</name>
        <dbReference type="ChEBI" id="CHEBI:49883"/>
    </ligand>
</feature>
<feature type="binding site" evidence="1">
    <location>
        <position position="267"/>
    </location>
    <ligand>
        <name>[4Fe-4S] cluster</name>
        <dbReference type="ChEBI" id="CHEBI:49883"/>
    </ligand>
</feature>
<feature type="binding site" evidence="1">
    <location>
        <position position="299"/>
    </location>
    <ligand>
        <name>[4Fe-4S] cluster</name>
        <dbReference type="ChEBI" id="CHEBI:49883"/>
    </ligand>
</feature>
<feature type="binding site" evidence="1">
    <location>
        <position position="306"/>
    </location>
    <ligand>
        <name>[4Fe-4S] cluster</name>
        <dbReference type="ChEBI" id="CHEBI:49883"/>
    </ligand>
</feature>
<name>ISPG_HELPG</name>
<keyword id="KW-0004">4Fe-4S</keyword>
<keyword id="KW-0408">Iron</keyword>
<keyword id="KW-0411">Iron-sulfur</keyword>
<keyword id="KW-0414">Isoprene biosynthesis</keyword>
<keyword id="KW-0479">Metal-binding</keyword>
<keyword id="KW-0560">Oxidoreductase</keyword>
<keyword id="KW-1185">Reference proteome</keyword>
<protein>
    <recommendedName>
        <fullName evidence="1">4-hydroxy-3-methylbut-2-en-1-yl diphosphate synthase (flavodoxin)</fullName>
        <ecNumber evidence="1">1.17.7.3</ecNumber>
    </recommendedName>
    <alternativeName>
        <fullName evidence="1">1-hydroxy-2-methyl-2-(E)-butenyl 4-diphosphate synthase</fullName>
    </alternativeName>
</protein>
<sequence length="359" mass="39257">MLENRVKTKQIFIGGVAIGGDAPISTQSMTFSKTADIESTKNQIDRLKLAGADLVRVAVSNEKDALALKELKKVSPLPLIADIHFHYKFALIAAQSVDAIRINPGNIGSKDKIKAVVDACKEKNIPIRIGVNAGSLEKQFDQKYGPTPKGMVESALYNAKLLEDLDFTNFKISLKASDVMRTIEAYRMLRPLVIYPFHLGVTEAGNLFSSSIKSAMALGGLLMEGIGDTMRVSITGELENEIKVARAILRHSGRLKEGINWISCPTCGRIEANLVDMASKVEKRLSHIKTPLDISVMGCVVNALGEAKHADMAIAFGNRSGLIIKEGKVIHKLAEKDLFETFVIEVENLAKEREKSLKD</sequence>
<evidence type="ECO:0000255" key="1">
    <source>
        <dbReference type="HAMAP-Rule" id="MF_00159"/>
    </source>
</evidence>